<name>INF24_UROAP</name>
<comment type="function">
    <text>Involved in the development of infection structures. The germ tube elongates across the leaf surface of the infected plant until it recognizes a stomate. Physical stimuli provided by the stomate induce differentiation of the germ tube to form a series of infection structures involved in host colonization.</text>
</comment>
<comment type="induction">
    <text>By the physical stimulus of an oil-collodion membrane.</text>
</comment>
<organism>
    <name type="scientific">Uromyces appendiculatus</name>
    <name type="common">Rust fungus</name>
    <dbReference type="NCBI Taxonomy" id="5264"/>
    <lineage>
        <taxon>Eukaryota</taxon>
        <taxon>Fungi</taxon>
        <taxon>Dikarya</taxon>
        <taxon>Basidiomycota</taxon>
        <taxon>Pucciniomycotina</taxon>
        <taxon>Pucciniomycetes</taxon>
        <taxon>Pucciniales</taxon>
        <taxon>Pucciniaceae</taxon>
        <taxon>Uromyces</taxon>
    </lineage>
</organism>
<protein>
    <recommendedName>
        <fullName>Infection structure-specific protein 24</fullName>
    </recommendedName>
</protein>
<sequence>MSASSQQQQSASSSSVASFNGGGFGGGLGIGGGFGGFGGMSSFNAQSSSSYSSSTVINSFASLGSQIAAIQGMMAGGSFTQTIAMQQMSQLAVSMQLALTQSAGCSCLTQVNSSNLDPAVHIYLNRSLSYFYRSLTSFHPSEVYFPNFRH</sequence>
<feature type="chain" id="PRO_0000084206" description="Infection structure-specific protein 24">
    <location>
        <begin position="1"/>
        <end position="150"/>
    </location>
</feature>
<reference key="1">
    <citation type="journal article" date="1989" name="Gene">
        <title>Characterization of an infection structure-specific gene from the rust fungus Uromyces appendiculatus.</title>
        <authorList>
            <person name="Bhairi S.M."/>
            <person name="Staples R.C."/>
            <person name="Freve P."/>
            <person name="Yoder O.C."/>
        </authorList>
    </citation>
    <scope>NUCLEOTIDE SEQUENCE [GENOMIC DNA]</scope>
</reference>
<accession>P14777</accession>
<accession>P19362</accession>
<proteinExistence type="evidence at transcript level"/>
<gene>
    <name type="primary">INF24</name>
</gene>
<dbReference type="EMBL" id="M29256">
    <property type="protein sequence ID" value="AAA34217.1"/>
    <property type="status" value="ALT_SEQ"/>
    <property type="molecule type" value="Genomic_DNA"/>
</dbReference>
<dbReference type="PIR" id="JS0297">
    <property type="entry name" value="JS0297"/>
</dbReference>